<keyword id="KW-0067">ATP-binding</keyword>
<keyword id="KW-0143">Chaperone</keyword>
<keyword id="KW-0547">Nucleotide-binding</keyword>
<keyword id="KW-1185">Reference proteome</keyword>
<keyword id="KW-0677">Repeat</keyword>
<gene>
    <name type="primary">clpC1</name>
    <name type="ordered locus">MT3703</name>
</gene>
<sequence length="848" mass="93524">MFERFTDRARKVVVLAQEEARMLNHNYIGTEHILLGLIHEGEGVAAKSLESLGISLEGVRSQVEEIIGQGQQAPSGHIPFTPRAKKVLELSLREALQLGHNYIGTEHILLGLIREGEGVAAQVLVKLGAELTRVRQQVIQLLSGYQGKEAAEAGTGGRGGESGSPSTSLVLDQFGRNLTAAAMEGKLDPVIGREKEIERVMQVLSRRTKNNPVLIGEPGVGKTAVVEGLAQAIVHGEVPETLKDKQLYTLDLGSLVAGSRYRGDFEERLKKVLKEINTRGDIILFIDELHTLVGAGAAEGAIDAASILKPKLARGELQTIGATTLDEYRKYIEKDAALERRFQPVQVGEPTVEHTIEILKGLRDRYEAHHRVSITDAAMVAAATLADRYINDRFLPDKAIDLIDEAGARMRIRRMTAPPDLREFDEKIAEARREKESAIDAQDFEKAASLRDREKTLVAQRAEREKQWRSGDLDVVAEVDDEQIAEVLGNWTGIPVFKLTEAETTRLLRMEEELHKRIIGQEDAVKAVSKAIRRTRAGLKDPKRPSGSFIFAGPSGVGKTELSKALANFLFGDDDALIQIDMGEFHDRFTASRLFGAPPGYVGYEEGGQLTEKVRRKPFSVVLFDEIEKAHQEIYNSLLQVLEDGRLTDGQGRTVDFKNTVLIFTSNLGTSDISKPVGLGFSKGGGENDYERMKQKVNDELKKHFRPEFLNRIDDIIVFHQLTREEIIRMVDLMISRVAGQLKSKDMALVLTDAAKALLAKRGFDPVLGARPLRRTIQREIEDQLSEKILFEEVGPGQVVTVDVDNWDGEGPGEDAVFTFTGTRKPPAEPDLAKAGAHSAGGPEPAAR</sequence>
<comment type="function">
    <text evidence="1">ATP-dependent specificity component of the Clp protease. It directs the protease to specific substrates. Can perform chaperone functions in the absence of ClpP (By similarity).</text>
</comment>
<comment type="induction">
    <text evidence="6">Expression requires transcriptional regulator ClgR.</text>
</comment>
<comment type="similarity">
    <text evidence="7">Belongs to the ClpA/ClpB family. ClpC subfamily.</text>
</comment>
<evidence type="ECO:0000250" key="1"/>
<evidence type="ECO:0000255" key="2"/>
<evidence type="ECO:0000255" key="3">
    <source>
        <dbReference type="PROSITE-ProRule" id="PRU00217"/>
    </source>
</evidence>
<evidence type="ECO:0000255" key="4">
    <source>
        <dbReference type="PROSITE-ProRule" id="PRU01251"/>
    </source>
</evidence>
<evidence type="ECO:0000256" key="5">
    <source>
        <dbReference type="SAM" id="MobiDB-lite"/>
    </source>
</evidence>
<evidence type="ECO:0000269" key="6">
    <source>
    </source>
</evidence>
<evidence type="ECO:0000305" key="7"/>
<proteinExistence type="evidence at transcript level"/>
<dbReference type="EMBL" id="AE000516">
    <property type="protein sequence ID" value="AAK48060.1"/>
    <property type="molecule type" value="Genomic_DNA"/>
</dbReference>
<dbReference type="PIR" id="E70954">
    <property type="entry name" value="E70954"/>
</dbReference>
<dbReference type="RefSeq" id="WP_010924687.1">
    <property type="nucleotide sequence ID" value="NC_002755.2"/>
</dbReference>
<dbReference type="SMR" id="P9WPC8"/>
<dbReference type="KEGG" id="mtc:MT3703"/>
<dbReference type="HOGENOM" id="CLU_005070_4_1_11"/>
<dbReference type="Proteomes" id="UP000001020">
    <property type="component" value="Chromosome"/>
</dbReference>
<dbReference type="GO" id="GO:0005737">
    <property type="term" value="C:cytoplasm"/>
    <property type="evidence" value="ECO:0007669"/>
    <property type="project" value="TreeGrafter"/>
</dbReference>
<dbReference type="GO" id="GO:0005524">
    <property type="term" value="F:ATP binding"/>
    <property type="evidence" value="ECO:0007669"/>
    <property type="project" value="UniProtKB-KW"/>
</dbReference>
<dbReference type="GO" id="GO:0016887">
    <property type="term" value="F:ATP hydrolysis activity"/>
    <property type="evidence" value="ECO:0007669"/>
    <property type="project" value="InterPro"/>
</dbReference>
<dbReference type="GO" id="GO:0034605">
    <property type="term" value="P:cellular response to heat"/>
    <property type="evidence" value="ECO:0007669"/>
    <property type="project" value="TreeGrafter"/>
</dbReference>
<dbReference type="CDD" id="cd00009">
    <property type="entry name" value="AAA"/>
    <property type="match status" value="1"/>
</dbReference>
<dbReference type="CDD" id="cd19499">
    <property type="entry name" value="RecA-like_ClpB_Hsp104-like"/>
    <property type="match status" value="1"/>
</dbReference>
<dbReference type="FunFam" id="1.10.8.60:FF:000017">
    <property type="entry name" value="ATP-dependent chaperone ClpB"/>
    <property type="match status" value="1"/>
</dbReference>
<dbReference type="FunFam" id="1.10.1780.10:FF:000001">
    <property type="entry name" value="ATP-dependent Clp protease ATP-binding subunit"/>
    <property type="match status" value="1"/>
</dbReference>
<dbReference type="FunFam" id="1.10.8.60:FF:000011">
    <property type="entry name" value="ATP-dependent Clp protease ATP-binding subunit"/>
    <property type="match status" value="1"/>
</dbReference>
<dbReference type="FunFam" id="4.10.860.10:FF:000004">
    <property type="entry name" value="ATP-dependent Clp protease ATP-binding subunit"/>
    <property type="match status" value="1"/>
</dbReference>
<dbReference type="FunFam" id="3.40.50.300:FF:000025">
    <property type="entry name" value="ATP-dependent Clp protease subunit"/>
    <property type="match status" value="1"/>
</dbReference>
<dbReference type="FunFam" id="3.40.50.300:FF:000010">
    <property type="entry name" value="Chaperone clpB 1, putative"/>
    <property type="match status" value="1"/>
</dbReference>
<dbReference type="Gene3D" id="1.10.8.60">
    <property type="match status" value="2"/>
</dbReference>
<dbReference type="Gene3D" id="1.10.1780.10">
    <property type="entry name" value="Clp, N-terminal domain"/>
    <property type="match status" value="1"/>
</dbReference>
<dbReference type="Gene3D" id="3.40.50.300">
    <property type="entry name" value="P-loop containing nucleotide triphosphate hydrolases"/>
    <property type="match status" value="2"/>
</dbReference>
<dbReference type="Gene3D" id="4.10.860.10">
    <property type="entry name" value="UVR domain"/>
    <property type="match status" value="1"/>
</dbReference>
<dbReference type="InterPro" id="IPR003593">
    <property type="entry name" value="AAA+_ATPase"/>
</dbReference>
<dbReference type="InterPro" id="IPR003959">
    <property type="entry name" value="ATPase_AAA_core"/>
</dbReference>
<dbReference type="InterPro" id="IPR019489">
    <property type="entry name" value="Clp_ATPase_C"/>
</dbReference>
<dbReference type="InterPro" id="IPR036628">
    <property type="entry name" value="Clp_N_dom_sf"/>
</dbReference>
<dbReference type="InterPro" id="IPR004176">
    <property type="entry name" value="Clp_R_dom"/>
</dbReference>
<dbReference type="InterPro" id="IPR001270">
    <property type="entry name" value="ClpA/B"/>
</dbReference>
<dbReference type="InterPro" id="IPR018368">
    <property type="entry name" value="ClpA/B_CS1"/>
</dbReference>
<dbReference type="InterPro" id="IPR041546">
    <property type="entry name" value="ClpA/ClpB_AAA_lid"/>
</dbReference>
<dbReference type="InterPro" id="IPR050130">
    <property type="entry name" value="ClpA_ClpB"/>
</dbReference>
<dbReference type="InterPro" id="IPR027417">
    <property type="entry name" value="P-loop_NTPase"/>
</dbReference>
<dbReference type="InterPro" id="IPR001943">
    <property type="entry name" value="UVR_dom"/>
</dbReference>
<dbReference type="PANTHER" id="PTHR11638">
    <property type="entry name" value="ATP-DEPENDENT CLP PROTEASE"/>
    <property type="match status" value="1"/>
</dbReference>
<dbReference type="PANTHER" id="PTHR11638:SF18">
    <property type="entry name" value="HEAT SHOCK PROTEIN 104"/>
    <property type="match status" value="1"/>
</dbReference>
<dbReference type="Pfam" id="PF00004">
    <property type="entry name" value="AAA"/>
    <property type="match status" value="1"/>
</dbReference>
<dbReference type="Pfam" id="PF07724">
    <property type="entry name" value="AAA_2"/>
    <property type="match status" value="1"/>
</dbReference>
<dbReference type="Pfam" id="PF17871">
    <property type="entry name" value="AAA_lid_9"/>
    <property type="match status" value="1"/>
</dbReference>
<dbReference type="Pfam" id="PF02861">
    <property type="entry name" value="Clp_N"/>
    <property type="match status" value="2"/>
</dbReference>
<dbReference type="Pfam" id="PF10431">
    <property type="entry name" value="ClpB_D2-small"/>
    <property type="match status" value="1"/>
</dbReference>
<dbReference type="PRINTS" id="PR00300">
    <property type="entry name" value="CLPPROTEASEA"/>
</dbReference>
<dbReference type="SMART" id="SM00382">
    <property type="entry name" value="AAA"/>
    <property type="match status" value="2"/>
</dbReference>
<dbReference type="SMART" id="SM01086">
    <property type="entry name" value="ClpB_D2-small"/>
    <property type="match status" value="1"/>
</dbReference>
<dbReference type="SUPFAM" id="SSF81923">
    <property type="entry name" value="Double Clp-N motif"/>
    <property type="match status" value="1"/>
</dbReference>
<dbReference type="SUPFAM" id="SSF52540">
    <property type="entry name" value="P-loop containing nucleoside triphosphate hydrolases"/>
    <property type="match status" value="2"/>
</dbReference>
<dbReference type="PROSITE" id="PS51903">
    <property type="entry name" value="CLP_R"/>
    <property type="match status" value="1"/>
</dbReference>
<dbReference type="PROSITE" id="PS00870">
    <property type="entry name" value="CLPAB_1"/>
    <property type="match status" value="1"/>
</dbReference>
<dbReference type="PROSITE" id="PS50151">
    <property type="entry name" value="UVR"/>
    <property type="match status" value="1"/>
</dbReference>
<accession>P9WPC8</accession>
<accession>L0TD96</accession>
<accession>O06286</accession>
<accession>P0A522</accession>
<name>CLPC1_MYCTO</name>
<feature type="chain" id="PRO_0000426974" description="ATP-dependent Clp protease ATP-binding subunit ClpC1">
    <location>
        <begin position="1"/>
        <end position="848"/>
    </location>
</feature>
<feature type="domain" description="Clp R" evidence="4">
    <location>
        <begin position="2"/>
        <end position="144"/>
    </location>
</feature>
<feature type="domain" description="UVR" evidence="3">
    <location>
        <begin position="425"/>
        <end position="460"/>
    </location>
</feature>
<feature type="region of interest" description="Repeat 1" evidence="4">
    <location>
        <begin position="5"/>
        <end position="70"/>
    </location>
</feature>
<feature type="region of interest" description="Repeat 2" evidence="4">
    <location>
        <begin position="80"/>
        <end position="144"/>
    </location>
</feature>
<feature type="region of interest" description="I">
    <location>
        <begin position="171"/>
        <end position="418"/>
    </location>
</feature>
<feature type="region of interest" description="II">
    <location>
        <begin position="479"/>
        <end position="670"/>
    </location>
</feature>
<feature type="region of interest" description="Disordered" evidence="5">
    <location>
        <begin position="821"/>
        <end position="848"/>
    </location>
</feature>
<feature type="binding site" evidence="2">
    <location>
        <begin position="216"/>
        <end position="223"/>
    </location>
    <ligand>
        <name>ATP</name>
        <dbReference type="ChEBI" id="CHEBI:30616"/>
    </ligand>
</feature>
<feature type="binding site" evidence="2">
    <location>
        <begin position="553"/>
        <end position="560"/>
    </location>
    <ligand>
        <name>ATP</name>
        <dbReference type="ChEBI" id="CHEBI:30616"/>
    </ligand>
</feature>
<protein>
    <recommendedName>
        <fullName>ATP-dependent Clp protease ATP-binding subunit ClpC1</fullName>
    </recommendedName>
</protein>
<reference key="1">
    <citation type="journal article" date="2002" name="J. Bacteriol.">
        <title>Whole-genome comparison of Mycobacterium tuberculosis clinical and laboratory strains.</title>
        <authorList>
            <person name="Fleischmann R.D."/>
            <person name="Alland D."/>
            <person name="Eisen J.A."/>
            <person name="Carpenter L."/>
            <person name="White O."/>
            <person name="Peterson J.D."/>
            <person name="DeBoy R.T."/>
            <person name="Dodson R.J."/>
            <person name="Gwinn M.L."/>
            <person name="Haft D.H."/>
            <person name="Hickey E.K."/>
            <person name="Kolonay J.F."/>
            <person name="Nelson W.C."/>
            <person name="Umayam L.A."/>
            <person name="Ermolaeva M.D."/>
            <person name="Salzberg S.L."/>
            <person name="Delcher A."/>
            <person name="Utterback T.R."/>
            <person name="Weidman J.F."/>
            <person name="Khouri H.M."/>
            <person name="Gill J."/>
            <person name="Mikula A."/>
            <person name="Bishai W."/>
            <person name="Jacobs W.R. Jr."/>
            <person name="Venter J.C."/>
            <person name="Fraser C.M."/>
        </authorList>
    </citation>
    <scope>NUCLEOTIDE SEQUENCE [LARGE SCALE GENOMIC DNA]</scope>
    <source>
        <strain>CDC 1551 / Oshkosh</strain>
    </source>
</reference>
<reference key="2">
    <citation type="journal article" date="2009" name="J. Bacteriol.">
        <title>Functional genomics reveals extended roles of the Mycobacterium tuberculosis stress response factor sigmaH.</title>
        <authorList>
            <person name="Mehra S."/>
            <person name="Kaushal D."/>
        </authorList>
    </citation>
    <scope>INDUCTION</scope>
    <source>
        <strain>CDC 1551 / Oshkosh</strain>
    </source>
</reference>
<organism>
    <name type="scientific">Mycobacterium tuberculosis (strain CDC 1551 / Oshkosh)</name>
    <dbReference type="NCBI Taxonomy" id="83331"/>
    <lineage>
        <taxon>Bacteria</taxon>
        <taxon>Bacillati</taxon>
        <taxon>Actinomycetota</taxon>
        <taxon>Actinomycetes</taxon>
        <taxon>Mycobacteriales</taxon>
        <taxon>Mycobacteriaceae</taxon>
        <taxon>Mycobacterium</taxon>
        <taxon>Mycobacterium tuberculosis complex</taxon>
    </lineage>
</organism>